<comment type="catalytic activity">
    <reaction>
        <text>Preferential cleavage: Arg-|-Xaa, Lys-|-Xaa.</text>
        <dbReference type="EC" id="3.4.21.4"/>
    </reaction>
</comment>
<comment type="subcellular location">
    <subcellularLocation>
        <location>Secreted</location>
        <location>Extracellular space</location>
    </subcellularLocation>
</comment>
<comment type="similarity">
    <text evidence="2">Belongs to the peptidase S1 family.</text>
</comment>
<evidence type="ECO:0000250" key="1"/>
<evidence type="ECO:0000255" key="2">
    <source>
        <dbReference type="PROSITE-ProRule" id="PRU00274"/>
    </source>
</evidence>
<evidence type="ECO:0000305" key="3"/>
<gene>
    <name type="primary">zetaTry</name>
</gene>
<dbReference type="EC" id="3.4.21.4"/>
<dbReference type="EMBL" id="U40653">
    <property type="protein sequence ID" value="AAA83236.1"/>
    <property type="molecule type" value="Genomic_DNA"/>
</dbReference>
<dbReference type="SMR" id="P54630"/>
<dbReference type="MEROPS" id="S01.116"/>
<dbReference type="eggNOG" id="KOG3627">
    <property type="taxonomic scope" value="Eukaryota"/>
</dbReference>
<dbReference type="OrthoDB" id="10059102at2759"/>
<dbReference type="GO" id="GO:0005576">
    <property type="term" value="C:extracellular region"/>
    <property type="evidence" value="ECO:0007669"/>
    <property type="project" value="UniProtKB-SubCell"/>
</dbReference>
<dbReference type="GO" id="GO:0004252">
    <property type="term" value="F:serine-type endopeptidase activity"/>
    <property type="evidence" value="ECO:0007669"/>
    <property type="project" value="UniProtKB-EC"/>
</dbReference>
<dbReference type="GO" id="GO:0006508">
    <property type="term" value="P:proteolysis"/>
    <property type="evidence" value="ECO:0007669"/>
    <property type="project" value="UniProtKB-KW"/>
</dbReference>
<dbReference type="CDD" id="cd00190">
    <property type="entry name" value="Tryp_SPc"/>
    <property type="match status" value="1"/>
</dbReference>
<dbReference type="FunFam" id="2.40.10.10:FF:000047">
    <property type="entry name" value="Trypsin eta"/>
    <property type="match status" value="1"/>
</dbReference>
<dbReference type="Gene3D" id="2.40.10.10">
    <property type="entry name" value="Trypsin-like serine proteases"/>
    <property type="match status" value="1"/>
</dbReference>
<dbReference type="InterPro" id="IPR050430">
    <property type="entry name" value="Peptidase_S1"/>
</dbReference>
<dbReference type="InterPro" id="IPR009003">
    <property type="entry name" value="Peptidase_S1_PA"/>
</dbReference>
<dbReference type="InterPro" id="IPR043504">
    <property type="entry name" value="Peptidase_S1_PA_chymotrypsin"/>
</dbReference>
<dbReference type="InterPro" id="IPR001314">
    <property type="entry name" value="Peptidase_S1A"/>
</dbReference>
<dbReference type="InterPro" id="IPR001254">
    <property type="entry name" value="Trypsin_dom"/>
</dbReference>
<dbReference type="InterPro" id="IPR018114">
    <property type="entry name" value="TRYPSIN_HIS"/>
</dbReference>
<dbReference type="InterPro" id="IPR033116">
    <property type="entry name" value="TRYPSIN_SER"/>
</dbReference>
<dbReference type="PANTHER" id="PTHR24276:SF91">
    <property type="entry name" value="AT26814P-RELATED"/>
    <property type="match status" value="1"/>
</dbReference>
<dbReference type="PANTHER" id="PTHR24276">
    <property type="entry name" value="POLYSERASE-RELATED"/>
    <property type="match status" value="1"/>
</dbReference>
<dbReference type="Pfam" id="PF00089">
    <property type="entry name" value="Trypsin"/>
    <property type="match status" value="1"/>
</dbReference>
<dbReference type="PRINTS" id="PR00722">
    <property type="entry name" value="CHYMOTRYPSIN"/>
</dbReference>
<dbReference type="SMART" id="SM00020">
    <property type="entry name" value="Tryp_SPc"/>
    <property type="match status" value="1"/>
</dbReference>
<dbReference type="SUPFAM" id="SSF50494">
    <property type="entry name" value="Trypsin-like serine proteases"/>
    <property type="match status" value="1"/>
</dbReference>
<dbReference type="PROSITE" id="PS50240">
    <property type="entry name" value="TRYPSIN_DOM"/>
    <property type="match status" value="1"/>
</dbReference>
<dbReference type="PROSITE" id="PS00134">
    <property type="entry name" value="TRYPSIN_HIS"/>
    <property type="match status" value="1"/>
</dbReference>
<dbReference type="PROSITE" id="PS00135">
    <property type="entry name" value="TRYPSIN_SER"/>
    <property type="match status" value="1"/>
</dbReference>
<reference key="1">
    <citation type="journal article" date="1999" name="Mol. Biol. Evol.">
        <title>Concerted evolution within a trypsin gene cluster in Drosophila.</title>
        <authorList>
            <person name="Wang S."/>
            <person name="Magoulas C."/>
            <person name="Hickey D.A."/>
        </authorList>
    </citation>
    <scope>NUCLEOTIDE SEQUENCE [GENOMIC DNA]</scope>
</reference>
<keyword id="KW-1015">Disulfide bond</keyword>
<keyword id="KW-0378">Hydrolase</keyword>
<keyword id="KW-0645">Protease</keyword>
<keyword id="KW-0964">Secreted</keyword>
<keyword id="KW-0720">Serine protease</keyword>
<keyword id="KW-0732">Signal</keyword>
<keyword id="KW-0865">Zymogen</keyword>
<name>TRYZ_DROER</name>
<proteinExistence type="inferred from homology"/>
<sequence length="281" mass="29736">MSSSSWLGCLLAVLLSALALSQGLPLLEDLDENSFPDGRIVGGYVTDIAQVPYQITLRYKAISSPENPFRHRCGGSIVNETTILTAAHCVIGTVASQFKVVAGTNFQTGTDGVITNVKRVIMHEGYNSGAAYNNDIAVLFVDPPLPLNNFTIKAIKLATEPPLDGAPSKISGWGSTYPGGYSSNQLLAVDVPIVGNDLCDLDYENFIDETYHITSAMLCAGKRGVGGADACQGDSGGPLVVRDELHGVVSWGNSCALPNYPGVYANVAFLRPWIDAVRAGL</sequence>
<accession>P54630</accession>
<organism>
    <name type="scientific">Drosophila erecta</name>
    <name type="common">Fruit fly</name>
    <dbReference type="NCBI Taxonomy" id="7220"/>
    <lineage>
        <taxon>Eukaryota</taxon>
        <taxon>Metazoa</taxon>
        <taxon>Ecdysozoa</taxon>
        <taxon>Arthropoda</taxon>
        <taxon>Hexapoda</taxon>
        <taxon>Insecta</taxon>
        <taxon>Pterygota</taxon>
        <taxon>Neoptera</taxon>
        <taxon>Endopterygota</taxon>
        <taxon>Diptera</taxon>
        <taxon>Brachycera</taxon>
        <taxon>Muscomorpha</taxon>
        <taxon>Ephydroidea</taxon>
        <taxon>Drosophilidae</taxon>
        <taxon>Drosophila</taxon>
        <taxon>Sophophora</taxon>
    </lineage>
</organism>
<protein>
    <recommendedName>
        <fullName>Trypsin zeta</fullName>
        <ecNumber>3.4.21.4</ecNumber>
    </recommendedName>
</protein>
<feature type="signal peptide" evidence="3">
    <location>
        <begin position="1"/>
        <end position="23"/>
    </location>
</feature>
<feature type="propeptide" id="PRO_0000028285" description="Activation peptide">
    <location>
        <begin position="24"/>
        <end position="39"/>
    </location>
</feature>
<feature type="chain" id="PRO_0000028286" description="Trypsin zeta">
    <location>
        <begin position="40"/>
        <end position="281"/>
    </location>
</feature>
<feature type="domain" description="Peptidase S1" evidence="2">
    <location>
        <begin position="40"/>
        <end position="279"/>
    </location>
</feature>
<feature type="active site" description="Charge relay system" evidence="1">
    <location>
        <position position="88"/>
    </location>
</feature>
<feature type="active site" description="Charge relay system" evidence="1">
    <location>
        <position position="135"/>
    </location>
</feature>
<feature type="active site" description="Charge relay system" evidence="1">
    <location>
        <position position="235"/>
    </location>
</feature>
<feature type="site" description="Required for specificity" evidence="1">
    <location>
        <position position="229"/>
    </location>
</feature>
<feature type="disulfide bond" evidence="2">
    <location>
        <begin position="73"/>
        <end position="89"/>
    </location>
</feature>
<feature type="disulfide bond" evidence="2">
    <location>
        <begin position="199"/>
        <end position="219"/>
    </location>
</feature>
<feature type="disulfide bond" evidence="2">
    <location>
        <begin position="231"/>
        <end position="255"/>
    </location>
</feature>